<reference key="1">
    <citation type="journal article" date="2002" name="Mol. Biol. Evol.">
        <title>The plastid chromosome of Atropa belladonna and its comparison with that of Nicotiana tabacum: the role of RNA editing in generating divergence in the process of plant speciation.</title>
        <authorList>
            <person name="Schmitz-Linneweber C."/>
            <person name="Regel R."/>
            <person name="Du T.G."/>
            <person name="Hupfer H."/>
            <person name="Herrmann R.G."/>
            <person name="Maier R.M."/>
        </authorList>
    </citation>
    <scope>NUCLEOTIDE SEQUENCE [LARGE SCALE GENOMIC DNA]</scope>
    <source>
        <strain>cv. Ab5p(kan)</strain>
    </source>
</reference>
<name>RK2A_ATRBE</name>
<dbReference type="EMBL" id="AJ316582">
    <property type="protein sequence ID" value="CAC88085.1"/>
    <property type="molecule type" value="Genomic_DNA"/>
</dbReference>
<dbReference type="SMR" id="Q8S8V3"/>
<dbReference type="GO" id="GO:0009507">
    <property type="term" value="C:chloroplast"/>
    <property type="evidence" value="ECO:0007669"/>
    <property type="project" value="UniProtKB-SubCell"/>
</dbReference>
<dbReference type="GO" id="GO:0005762">
    <property type="term" value="C:mitochondrial large ribosomal subunit"/>
    <property type="evidence" value="ECO:0007669"/>
    <property type="project" value="TreeGrafter"/>
</dbReference>
<dbReference type="GO" id="GO:0019843">
    <property type="term" value="F:rRNA binding"/>
    <property type="evidence" value="ECO:0007669"/>
    <property type="project" value="UniProtKB-UniRule"/>
</dbReference>
<dbReference type="GO" id="GO:0003735">
    <property type="term" value="F:structural constituent of ribosome"/>
    <property type="evidence" value="ECO:0007669"/>
    <property type="project" value="InterPro"/>
</dbReference>
<dbReference type="GO" id="GO:0016740">
    <property type="term" value="F:transferase activity"/>
    <property type="evidence" value="ECO:0007669"/>
    <property type="project" value="InterPro"/>
</dbReference>
<dbReference type="GO" id="GO:0032543">
    <property type="term" value="P:mitochondrial translation"/>
    <property type="evidence" value="ECO:0007669"/>
    <property type="project" value="TreeGrafter"/>
</dbReference>
<dbReference type="FunFam" id="4.10.950.10:FF:000001">
    <property type="entry name" value="50S ribosomal protein L2"/>
    <property type="match status" value="1"/>
</dbReference>
<dbReference type="FunFam" id="2.30.30.30:FF:000008">
    <property type="entry name" value="50S ribosomal protein L2, chloroplastic"/>
    <property type="match status" value="1"/>
</dbReference>
<dbReference type="FunFam" id="2.40.50.140:FF:000029">
    <property type="entry name" value="50S ribosomal protein L2, chloroplastic"/>
    <property type="match status" value="1"/>
</dbReference>
<dbReference type="Gene3D" id="2.30.30.30">
    <property type="match status" value="1"/>
</dbReference>
<dbReference type="Gene3D" id="2.40.50.140">
    <property type="entry name" value="Nucleic acid-binding proteins"/>
    <property type="match status" value="1"/>
</dbReference>
<dbReference type="Gene3D" id="4.10.950.10">
    <property type="entry name" value="Ribosomal protein L2, domain 3"/>
    <property type="match status" value="1"/>
</dbReference>
<dbReference type="HAMAP" id="MF_01320_B">
    <property type="entry name" value="Ribosomal_uL2_B"/>
    <property type="match status" value="1"/>
</dbReference>
<dbReference type="InterPro" id="IPR012340">
    <property type="entry name" value="NA-bd_OB-fold"/>
</dbReference>
<dbReference type="InterPro" id="IPR014722">
    <property type="entry name" value="Rib_uL2_dom2"/>
</dbReference>
<dbReference type="InterPro" id="IPR002171">
    <property type="entry name" value="Ribosomal_uL2"/>
</dbReference>
<dbReference type="InterPro" id="IPR005880">
    <property type="entry name" value="Ribosomal_uL2_bac/org-type"/>
</dbReference>
<dbReference type="InterPro" id="IPR022669">
    <property type="entry name" value="Ribosomal_uL2_C"/>
</dbReference>
<dbReference type="InterPro" id="IPR022671">
    <property type="entry name" value="Ribosomal_uL2_CS"/>
</dbReference>
<dbReference type="InterPro" id="IPR014726">
    <property type="entry name" value="Ribosomal_uL2_dom3"/>
</dbReference>
<dbReference type="InterPro" id="IPR022666">
    <property type="entry name" value="Ribosomal_uL2_RNA-bd_dom"/>
</dbReference>
<dbReference type="InterPro" id="IPR008991">
    <property type="entry name" value="Translation_prot_SH3-like_sf"/>
</dbReference>
<dbReference type="NCBIfam" id="TIGR01171">
    <property type="entry name" value="rplB_bact"/>
    <property type="match status" value="1"/>
</dbReference>
<dbReference type="PANTHER" id="PTHR13691:SF5">
    <property type="entry name" value="LARGE RIBOSOMAL SUBUNIT PROTEIN UL2M"/>
    <property type="match status" value="1"/>
</dbReference>
<dbReference type="PANTHER" id="PTHR13691">
    <property type="entry name" value="RIBOSOMAL PROTEIN L2"/>
    <property type="match status" value="1"/>
</dbReference>
<dbReference type="Pfam" id="PF00181">
    <property type="entry name" value="Ribosomal_L2"/>
    <property type="match status" value="1"/>
</dbReference>
<dbReference type="Pfam" id="PF03947">
    <property type="entry name" value="Ribosomal_L2_C"/>
    <property type="match status" value="1"/>
</dbReference>
<dbReference type="PIRSF" id="PIRSF002158">
    <property type="entry name" value="Ribosomal_L2"/>
    <property type="match status" value="1"/>
</dbReference>
<dbReference type="SMART" id="SM01383">
    <property type="entry name" value="Ribosomal_L2"/>
    <property type="match status" value="1"/>
</dbReference>
<dbReference type="SMART" id="SM01382">
    <property type="entry name" value="Ribosomal_L2_C"/>
    <property type="match status" value="1"/>
</dbReference>
<dbReference type="SUPFAM" id="SSF50249">
    <property type="entry name" value="Nucleic acid-binding proteins"/>
    <property type="match status" value="1"/>
</dbReference>
<dbReference type="SUPFAM" id="SSF50104">
    <property type="entry name" value="Translation proteins SH3-like domain"/>
    <property type="match status" value="1"/>
</dbReference>
<dbReference type="PROSITE" id="PS00467">
    <property type="entry name" value="RIBOSOMAL_L2"/>
    <property type="match status" value="1"/>
</dbReference>
<feature type="chain" id="PRO_0000129666" description="Large ribosomal subunit protein uL2cz">
    <location>
        <begin position="1"/>
        <end position="274"/>
    </location>
</feature>
<feature type="region of interest" description="Disordered" evidence="3">
    <location>
        <begin position="1"/>
        <end position="25"/>
    </location>
</feature>
<feature type="region of interest" description="Disordered" evidence="3">
    <location>
        <begin position="224"/>
        <end position="274"/>
    </location>
</feature>
<feature type="compositionally biased region" description="Polar residues" evidence="3">
    <location>
        <begin position="7"/>
        <end position="25"/>
    </location>
</feature>
<proteinExistence type="inferred from homology"/>
<keyword id="KW-0150">Chloroplast</keyword>
<keyword id="KW-0934">Plastid</keyword>
<keyword id="KW-0687">Ribonucleoprotein</keyword>
<keyword id="KW-0689">Ribosomal protein</keyword>
<sequence>MAIHLYKTSTPSTRNGTVDSQVKSNPRNNLIYGQRRCGKGRNARGIITARHRGGGHKRLYRKIDFRRNEKDIYGRIVTIEYDPNRNAYICLIHYGDGEKRYILHPRGAIIGDTIVSGTEVPIKMGNALPLTDMPLGTAIHNIEITLGKGGQLARAAGAVAKLIAKEGKSATLKLPSGEVRLISKNCSATVGQVGNVGVNQKSLGRAGSKRWLGKRPVVRGVVMNPVDHPHGGGEGRAPIGRKKPTTPWGYPALGRRSRKRNKYSDNLILRRRSK</sequence>
<geneLocation type="chloroplast"/>
<comment type="subunit">
    <text evidence="1">Part of the 50S ribosomal subunit.</text>
</comment>
<comment type="subcellular location">
    <subcellularLocation>
        <location>Plastid</location>
        <location>Chloroplast</location>
    </subcellularLocation>
</comment>
<comment type="similarity">
    <text evidence="4">Belongs to the universal ribosomal protein uL2 family.</text>
</comment>
<comment type="caution">
    <text evidence="4">There is 1 gene for this protein in each of the chloroplast inverted repeats; while they are usually identical, in this organism they are not. The other copy is AC Q8S8U0.</text>
</comment>
<protein>
    <recommendedName>
        <fullName evidence="2">Large ribosomal subunit protein uL2cz</fullName>
    </recommendedName>
    <alternativeName>
        <fullName evidence="4">50S ribosomal protein L2-A, chloroplastic</fullName>
    </alternativeName>
</protein>
<organism>
    <name type="scientific">Atropa belladonna</name>
    <name type="common">Belladonna</name>
    <name type="synonym">Deadly nightshade</name>
    <dbReference type="NCBI Taxonomy" id="33113"/>
    <lineage>
        <taxon>Eukaryota</taxon>
        <taxon>Viridiplantae</taxon>
        <taxon>Streptophyta</taxon>
        <taxon>Embryophyta</taxon>
        <taxon>Tracheophyta</taxon>
        <taxon>Spermatophyta</taxon>
        <taxon>Magnoliopsida</taxon>
        <taxon>eudicotyledons</taxon>
        <taxon>Gunneridae</taxon>
        <taxon>Pentapetalae</taxon>
        <taxon>asterids</taxon>
        <taxon>lamiids</taxon>
        <taxon>Solanales</taxon>
        <taxon>Solanaceae</taxon>
        <taxon>Solanoideae</taxon>
        <taxon>Hyoscyameae</taxon>
        <taxon>Atropa</taxon>
    </lineage>
</organism>
<accession>Q8S8V3</accession>
<gene>
    <name type="primary">rpl2-A</name>
</gene>
<evidence type="ECO:0000250" key="1"/>
<evidence type="ECO:0000255" key="2">
    <source>
        <dbReference type="HAMAP-Rule" id="MF_01320"/>
    </source>
</evidence>
<evidence type="ECO:0000256" key="3">
    <source>
        <dbReference type="SAM" id="MobiDB-lite"/>
    </source>
</evidence>
<evidence type="ECO:0000305" key="4"/>